<protein>
    <recommendedName>
        <fullName evidence="6">Axonemal dynein light intermediate polypeptide 1</fullName>
    </recommendedName>
    <alternativeName>
        <fullName>Inner dynein arm light chain, axonemal</fullName>
    </alternativeName>
</protein>
<keyword id="KW-0966">Cell projection</keyword>
<keyword id="KW-0969">Cilium</keyword>
<keyword id="KW-0175">Coiled coil</keyword>
<keyword id="KW-0963">Cytoplasm</keyword>
<keyword id="KW-0243">Dynein</keyword>
<keyword id="KW-0282">Flagellum</keyword>
<keyword id="KW-0505">Motor protein</keyword>
<keyword id="KW-1185">Reference proteome</keyword>
<comment type="function">
    <text evidence="2">Involved in sperm flagellum assembly.</text>
</comment>
<comment type="subcellular location">
    <subcellularLocation>
        <location evidence="1">Cell projection</location>
        <location evidence="1">Cilium</location>
    </subcellularLocation>
    <subcellularLocation>
        <location evidence="1">Cell projection</location>
        <location evidence="1">Cilium</location>
        <location evidence="1">Flagellum</location>
    </subcellularLocation>
    <subcellularLocation>
        <location evidence="5">Dynein axonemal particle</location>
    </subcellularLocation>
    <subcellularLocation>
        <location evidence="2">Cytoplasm</location>
    </subcellularLocation>
</comment>
<comment type="similarity">
    <text evidence="6">Belongs to the inner dynein arm light chain family.</text>
</comment>
<dbReference type="EMBL" id="BC073629">
    <property type="protein sequence ID" value="AAH73629.1"/>
    <property type="molecule type" value="mRNA"/>
</dbReference>
<dbReference type="EMBL" id="CM004469">
    <property type="protein sequence ID" value="OCT92136.1"/>
    <property type="molecule type" value="Genomic_DNA"/>
</dbReference>
<dbReference type="RefSeq" id="NP_001085973.1">
    <property type="nucleotide sequence ID" value="NM_001092504.1"/>
</dbReference>
<dbReference type="SMR" id="Q6GN86"/>
<dbReference type="STRING" id="8355.Q6GN86"/>
<dbReference type="PaxDb" id="8355-Q6GN86"/>
<dbReference type="DNASU" id="444402"/>
<dbReference type="GeneID" id="444402"/>
<dbReference type="KEGG" id="xla:444402"/>
<dbReference type="AGR" id="Xenbase:XB-GENE-866556"/>
<dbReference type="CTD" id="444402"/>
<dbReference type="Xenbase" id="XB-GENE-866556">
    <property type="gene designation" value="dnali1.S"/>
</dbReference>
<dbReference type="OMA" id="QVTIICA"/>
<dbReference type="OrthoDB" id="273640at2759"/>
<dbReference type="Proteomes" id="UP000186698">
    <property type="component" value="Chromosome 2S"/>
</dbReference>
<dbReference type="Proteomes" id="UP000694892">
    <property type="component" value="Chromosome 2S"/>
</dbReference>
<dbReference type="Bgee" id="444402">
    <property type="expression patterns" value="Expressed in testis and 16 other cell types or tissues"/>
</dbReference>
<dbReference type="GO" id="GO:0005930">
    <property type="term" value="C:axoneme"/>
    <property type="evidence" value="ECO:0000318"/>
    <property type="project" value="GO_Central"/>
</dbReference>
<dbReference type="GO" id="GO:0097546">
    <property type="term" value="C:ciliary base"/>
    <property type="evidence" value="ECO:0000318"/>
    <property type="project" value="GO_Central"/>
</dbReference>
<dbReference type="GO" id="GO:0120293">
    <property type="term" value="C:dynein axonemal particle"/>
    <property type="evidence" value="ECO:0000314"/>
    <property type="project" value="UniProtKB"/>
</dbReference>
<dbReference type="GO" id="GO:0030286">
    <property type="term" value="C:dynein complex"/>
    <property type="evidence" value="ECO:0007669"/>
    <property type="project" value="UniProtKB-KW"/>
</dbReference>
<dbReference type="GO" id="GO:0031514">
    <property type="term" value="C:motile cilium"/>
    <property type="evidence" value="ECO:0000250"/>
    <property type="project" value="UniProtKB"/>
</dbReference>
<dbReference type="GO" id="GO:0036126">
    <property type="term" value="C:sperm flagellum"/>
    <property type="evidence" value="ECO:0000250"/>
    <property type="project" value="UniProtKB"/>
</dbReference>
<dbReference type="GO" id="GO:0045504">
    <property type="term" value="F:dynein heavy chain binding"/>
    <property type="evidence" value="ECO:0000318"/>
    <property type="project" value="GO_Central"/>
</dbReference>
<dbReference type="GO" id="GO:0120316">
    <property type="term" value="P:sperm flagellum assembly"/>
    <property type="evidence" value="ECO:0000250"/>
    <property type="project" value="UniProtKB"/>
</dbReference>
<dbReference type="InterPro" id="IPR019347">
    <property type="entry name" value="Axonemal_dynein_light_chain"/>
</dbReference>
<dbReference type="PANTHER" id="PTHR13183:SF0">
    <property type="entry name" value="AXONEMAL DYNEIN LIGHT INTERMEDIATE POLYPEPTIDE 1"/>
    <property type="match status" value="1"/>
</dbReference>
<dbReference type="PANTHER" id="PTHR13183">
    <property type="entry name" value="AXONEMAL INNER ARM DYNEIN LIGHT CHAIN 28"/>
    <property type="match status" value="1"/>
</dbReference>
<dbReference type="Pfam" id="PF10211">
    <property type="entry name" value="Ax_dynein_light"/>
    <property type="match status" value="1"/>
</dbReference>
<name>IDLC_XENLA</name>
<sequence length="254" mass="29246">MIPPADSLLKHDNPVLISKNTERKSPKSRPLKVSSPQTVLTAPVPPPPKPKTPLLDATKPAEEILNAILPPREWVENNQLWIQQVSSTPSTRMDVVHLQEELDMKLQQRQARETGICPVRRELYSQCFDELIRQVTINCAERGLLLLRVRDEIHMTISAYQTLYESSVAFGMRKALQAEQGKSDMEKRMADLEMEKKDLERQVNEQKAKCEAIEKREAERRQVEEKKHAEEIQFLKRTNQQLKAQLEGIIAPKK</sequence>
<feature type="chain" id="PRO_0000452445" description="Axonemal dynein light intermediate polypeptide 1">
    <location>
        <begin position="1"/>
        <end position="254"/>
    </location>
</feature>
<feature type="region of interest" description="Disordered" evidence="4">
    <location>
        <begin position="1"/>
        <end position="55"/>
    </location>
</feature>
<feature type="coiled-coil region" evidence="3">
    <location>
        <begin position="175"/>
        <end position="245"/>
    </location>
</feature>
<gene>
    <name evidence="10" type="primary">dnali1</name>
    <name evidence="8" type="ORF">XELAEV_18015190mg</name>
</gene>
<evidence type="ECO:0000250" key="1">
    <source>
        <dbReference type="UniProtKB" id="O14645"/>
    </source>
</evidence>
<evidence type="ECO:0000250" key="2">
    <source>
        <dbReference type="UniProtKB" id="Q8BVN8"/>
    </source>
</evidence>
<evidence type="ECO:0000255" key="3"/>
<evidence type="ECO:0000256" key="4">
    <source>
        <dbReference type="SAM" id="MobiDB-lite"/>
    </source>
</evidence>
<evidence type="ECO:0000269" key="5">
    <source>
    </source>
</evidence>
<evidence type="ECO:0000305" key="6"/>
<evidence type="ECO:0000312" key="7">
    <source>
        <dbReference type="EMBL" id="AAH73629.1"/>
    </source>
</evidence>
<evidence type="ECO:0000312" key="8">
    <source>
        <dbReference type="EMBL" id="OCT92136.1"/>
    </source>
</evidence>
<evidence type="ECO:0000312" key="9">
    <source>
        <dbReference type="Proteomes" id="UP000186698"/>
    </source>
</evidence>
<evidence type="ECO:0000312" key="10">
    <source>
        <dbReference type="Xenbase" id="XB-GENE-866556"/>
    </source>
</evidence>
<reference evidence="7" key="1">
    <citation type="submission" date="2004-06" db="EMBL/GenBank/DDBJ databases">
        <authorList>
            <consortium name="NIH - Xenopus Gene Collection (XGC) project"/>
        </authorList>
    </citation>
    <scope>NUCLEOTIDE SEQUENCE [LARGE SCALE MRNA]</scope>
    <source>
        <tissue evidence="7">Embryo</tissue>
    </source>
</reference>
<reference evidence="9" key="2">
    <citation type="journal article" date="2016" name="Nature">
        <title>Genome evolution in the allotetraploid frog Xenopus laevis.</title>
        <authorList>
            <person name="Session A.M."/>
            <person name="Uno Y."/>
            <person name="Kwon T."/>
            <person name="Chapman J.A."/>
            <person name="Toyoda A."/>
            <person name="Takahashi S."/>
            <person name="Fukui A."/>
            <person name="Hikosaka A."/>
            <person name="Suzuki A."/>
            <person name="Kondo M."/>
            <person name="van Heeringen S.J."/>
            <person name="Quigley I."/>
            <person name="Heinz S."/>
            <person name="Ogino H."/>
            <person name="Ochi H."/>
            <person name="Hellsten U."/>
            <person name="Lyons J.B."/>
            <person name="Simakov O."/>
            <person name="Putnam N."/>
            <person name="Stites J."/>
            <person name="Kuroki Y."/>
            <person name="Tanaka T."/>
            <person name="Michiue T."/>
            <person name="Watanabe M."/>
            <person name="Bogdanovic O."/>
            <person name="Lister R."/>
            <person name="Georgiou G."/>
            <person name="Paranjpe S.S."/>
            <person name="van Kruijsbergen I."/>
            <person name="Shu S."/>
            <person name="Carlson J."/>
            <person name="Kinoshita T."/>
            <person name="Ohta Y."/>
            <person name="Mawaribuchi S."/>
            <person name="Jenkins J."/>
            <person name="Grimwood J."/>
            <person name="Schmutz J."/>
            <person name="Mitros T."/>
            <person name="Mozaffari S.V."/>
            <person name="Suzuki Y."/>
            <person name="Haramoto Y."/>
            <person name="Yamamoto T.S."/>
            <person name="Takagi C."/>
            <person name="Heald R."/>
            <person name="Miller K."/>
            <person name="Haudenschild C."/>
            <person name="Kitzman J."/>
            <person name="Nakayama T."/>
            <person name="Izutsu Y."/>
            <person name="Robert J."/>
            <person name="Fortriede J."/>
            <person name="Burns K."/>
            <person name="Lotay V."/>
            <person name="Karimi K."/>
            <person name="Yasuoka Y."/>
            <person name="Dichmann D.S."/>
            <person name="Flajnik M.F."/>
            <person name="Houston D.W."/>
            <person name="Shendure J."/>
            <person name="DuPasquier L."/>
            <person name="Vize P.D."/>
            <person name="Zorn A.M."/>
            <person name="Ito M."/>
            <person name="Marcotte E.M."/>
            <person name="Wallingford J.B."/>
            <person name="Ito Y."/>
            <person name="Asashima M."/>
            <person name="Ueno N."/>
            <person name="Matsuda Y."/>
            <person name="Veenstra G.J."/>
            <person name="Fujiyama A."/>
            <person name="Harland R.M."/>
            <person name="Taira M."/>
            <person name="Rokhsar D.S."/>
        </authorList>
    </citation>
    <scope>NUCLEOTIDE SEQUENCE [LARGE SCALE GENOMIC DNA]</scope>
    <source>
        <strain evidence="9">J</strain>
    </source>
</reference>
<reference evidence="8" key="3">
    <citation type="submission" date="2016-05" db="EMBL/GenBank/DDBJ databases">
        <title>WGS assembly of Xenopus laevis.</title>
        <authorList>
            <person name="Session A."/>
            <person name="Uno Y."/>
            <person name="Kwon T."/>
            <person name="Chapman J."/>
            <person name="Toyoda A."/>
            <person name="Takahashi S."/>
            <person name="Fukui A."/>
            <person name="Hikosaka A."/>
            <person name="Putnam N."/>
            <person name="Stites J."/>
            <person name="Van Heeringen S."/>
            <person name="Quigley I."/>
            <person name="Heinz S."/>
            <person name="Hellsten U."/>
            <person name="Lyons J."/>
            <person name="Suzuki A."/>
            <person name="Kondo M."/>
            <person name="Ogino H."/>
            <person name="Ochi H."/>
            <person name="Bogdanovic O."/>
            <person name="Lister R."/>
            <person name="Georgiou G."/>
            <person name="Paranjpe S."/>
            <person name="Van Kruijsbergen I."/>
            <person name="Mozaffari S."/>
            <person name="Shu S."/>
            <person name="Schmutz J."/>
            <person name="Jenkins J."/>
            <person name="Grimwood J."/>
            <person name="Carlson J."/>
            <person name="Mitros T."/>
            <person name="Simakov O."/>
            <person name="Heald R."/>
            <person name="Miller K."/>
            <person name="Haudenschild C."/>
            <person name="Kuroki Y."/>
            <person name="Tanaka T."/>
            <person name="Michiue T."/>
            <person name="Watanabe M."/>
            <person name="Kinoshita T."/>
            <person name="Ohta Y."/>
            <person name="Mawaribuchi S."/>
            <person name="Suzuki Y."/>
            <person name="Haramoto Y."/>
            <person name="Yamamoto T."/>
            <person name="Takagi C."/>
            <person name="Kitzman J."/>
            <person name="Shendure J."/>
            <person name="Nakayama T."/>
            <person name="Izutsu Y."/>
            <person name="Robert J."/>
            <person name="Dichmann D."/>
            <person name="Flajnik M."/>
            <person name="Houston D."/>
            <person name="Marcotte E."/>
            <person name="Wallingford J."/>
            <person name="Ito Y."/>
            <person name="Asashima M."/>
            <person name="Ueno N."/>
            <person name="Matsuda Y."/>
            <person name="Jan Veenstra G."/>
            <person name="Fujiyama A."/>
            <person name="Harland R."/>
            <person name="Taira M."/>
            <person name="Rokhsar D.S."/>
        </authorList>
    </citation>
    <scope>NUCLEOTIDE SEQUENCE</scope>
    <source>
        <strain evidence="8">J</strain>
        <tissue evidence="8">Blood</tissue>
    </source>
</reference>
<reference key="4">
    <citation type="journal article" date="2020" name="Elife">
        <title>Functional partitioning of a liquid-like organelle during assembly of axonemal dyneins.</title>
        <authorList>
            <person name="Lee C."/>
            <person name="Cox R.M."/>
            <person name="Papoulas O."/>
            <person name="Horani A."/>
            <person name="Drew K."/>
            <person name="Devitt C.C."/>
            <person name="Brody S.L."/>
            <person name="Marcotte E.M."/>
            <person name="Wallingford J.B."/>
        </authorList>
    </citation>
    <scope>SUBCELLULAR LOCATION</scope>
</reference>
<proteinExistence type="evidence at transcript level"/>
<organism evidence="7">
    <name type="scientific">Xenopus laevis</name>
    <name type="common">African clawed frog</name>
    <dbReference type="NCBI Taxonomy" id="8355"/>
    <lineage>
        <taxon>Eukaryota</taxon>
        <taxon>Metazoa</taxon>
        <taxon>Chordata</taxon>
        <taxon>Craniata</taxon>
        <taxon>Vertebrata</taxon>
        <taxon>Euteleostomi</taxon>
        <taxon>Amphibia</taxon>
        <taxon>Batrachia</taxon>
        <taxon>Anura</taxon>
        <taxon>Pipoidea</taxon>
        <taxon>Pipidae</taxon>
        <taxon>Xenopodinae</taxon>
        <taxon>Xenopus</taxon>
        <taxon>Xenopus</taxon>
    </lineage>
</organism>
<accession>Q6GN86</accession>